<keyword id="KW-1035">Host cytoplasm</keyword>
<keyword id="KW-0945">Host-virus interaction</keyword>
<keyword id="KW-0426">Late protein</keyword>
<keyword id="KW-1185">Reference proteome</keyword>
<keyword id="KW-1161">Viral attachment to host cell</keyword>
<keyword id="KW-1264">Viral receptor tropism switching</keyword>
<keyword id="KW-1188">Viral release from host cell</keyword>
<keyword id="KW-1245">Viral tail assembly</keyword>
<keyword id="KW-1246">Viral tail fiber assembly</keyword>
<keyword id="KW-0946">Virion</keyword>
<keyword id="KW-1160">Virus entry into host cell</keyword>
<reference key="1">
    <citation type="journal article" date="2004" name="J. Bacteriol.">
        <title>Genome of bacteriophage P1.</title>
        <authorList>
            <person name="Lobocka M.B."/>
            <person name="Rose D.J."/>
            <person name="Plunkett G. III"/>
            <person name="Rusin M."/>
            <person name="Samojedny A."/>
            <person name="Lehnherr H."/>
            <person name="Yarmolinsky M.B."/>
            <person name="Blattner F.R."/>
        </authorList>
    </citation>
    <scope>NUCLEOTIDE SEQUENCE [GENOMIC DNA]</scope>
    <source>
        <strain evidence="4">Mod1902::IS5 c1.100 rev dmt</strain>
        <strain>Mod749::IS5 c1.100 mutant</strain>
    </source>
</reference>
<reference key="2">
    <citation type="journal article" date="1982" name="EMBO J.">
        <title>A site-specific, conservative recombination system carried by bacteriophage P1. Mapping the recombinase gene cin and the cross-over sites cix for the inversion of the C segment.</title>
        <authorList>
            <person name="Iida S."/>
            <person name="Meyer J."/>
            <person name="Kennedy K.E."/>
            <person name="Arber W."/>
        </authorList>
    </citation>
    <scope>FUNCTION</scope>
    <scope>INDUCTION</scope>
</reference>
<feature type="chain" id="PRO_0000432953" description="Tail fiber assembly protein U'">
    <location>
        <begin position="1"/>
        <end position="177"/>
    </location>
</feature>
<comment type="function">
    <text evidence="1 3">Chaperone involved in tail fiber assembly. Expressed alternatively with tail fiber assembly protein U'. Remains associated to the tail fiber and participates in the host receptor binding. Two alternate tail fiber assembly proteins U and U' are encoded extending the host range of the virus.</text>
</comment>
<comment type="subcellular location">
    <subcellularLocation>
        <location>Virion</location>
    </subcellularLocation>
    <subcellularLocation>
        <location>Host cytoplasm</location>
    </subcellularLocation>
    <text evidence="1">Tail fiber.</text>
</comment>
<comment type="induction">
    <text evidence="1 3">Expressed alternatively with tail fiber assembly protein U'. The switch from S-U to S'-U' is performed through inversion of a DNA segment called C by the phage invertase protein Cin.</text>
</comment>
<comment type="similarity">
    <text evidence="2">Belongs to the tfa family.</text>
</comment>
<dbReference type="EMBL" id="AF234172">
    <property type="protein sequence ID" value="AAQ14004.1"/>
    <property type="molecule type" value="Genomic_DNA"/>
</dbReference>
<dbReference type="EMBL" id="AF234173">
    <property type="protein sequence ID" value="AAQ14112.1"/>
    <property type="molecule type" value="Genomic_DNA"/>
</dbReference>
<dbReference type="SMR" id="Q71TD7"/>
<dbReference type="KEGG" id="vg:2777419"/>
<dbReference type="Proteomes" id="UP000001577">
    <property type="component" value="Segment"/>
</dbReference>
<dbReference type="Proteomes" id="UP000008091">
    <property type="component" value="Genome"/>
</dbReference>
<dbReference type="GO" id="GO:0030430">
    <property type="term" value="C:host cell cytoplasm"/>
    <property type="evidence" value="ECO:0007669"/>
    <property type="project" value="UniProtKB-SubCell"/>
</dbReference>
<dbReference type="GO" id="GO:0044423">
    <property type="term" value="C:virion component"/>
    <property type="evidence" value="ECO:0007669"/>
    <property type="project" value="UniProtKB-KW"/>
</dbReference>
<dbReference type="GO" id="GO:0046718">
    <property type="term" value="P:symbiont entry into host cell"/>
    <property type="evidence" value="ECO:0007669"/>
    <property type="project" value="UniProtKB-KW"/>
</dbReference>
<dbReference type="GO" id="GO:0098678">
    <property type="term" value="P:viral tropism switching"/>
    <property type="evidence" value="ECO:0007669"/>
    <property type="project" value="UniProtKB-KW"/>
</dbReference>
<dbReference type="GO" id="GO:0019062">
    <property type="term" value="P:virion attachment to host cell"/>
    <property type="evidence" value="ECO:0007669"/>
    <property type="project" value="UniProtKB-KW"/>
</dbReference>
<dbReference type="GO" id="GO:0098004">
    <property type="term" value="P:virus tail fiber assembly"/>
    <property type="evidence" value="ECO:0007669"/>
    <property type="project" value="UniProtKB-KW"/>
</dbReference>
<dbReference type="InterPro" id="IPR003458">
    <property type="entry name" value="Phage_T4_Gp38_tail_assem"/>
</dbReference>
<dbReference type="Pfam" id="PF02413">
    <property type="entry name" value="Caudo_TAP"/>
    <property type="match status" value="1"/>
</dbReference>
<organism>
    <name type="scientific">Escherichia phage P1</name>
    <name type="common">Bacteriophage P1</name>
    <dbReference type="NCBI Taxonomy" id="2886926"/>
    <lineage>
        <taxon>Viruses</taxon>
        <taxon>Duplodnaviria</taxon>
        <taxon>Heunggongvirae</taxon>
        <taxon>Uroviricota</taxon>
        <taxon>Caudoviricetes</taxon>
        <taxon>Punavirus</taxon>
        <taxon>Punavirus P1</taxon>
    </lineage>
</organism>
<name>U2_BPP1</name>
<protein>
    <recommendedName>
        <fullName evidence="2">Tail fiber assembly protein U'</fullName>
    </recommendedName>
    <alternativeName>
        <fullName evidence="2">Gene product U'</fullName>
        <shortName>gpU'</shortName>
    </alternativeName>
</protein>
<proteinExistence type="evidence at transcript level"/>
<organismHost>
    <name type="scientific">Enterobacteriaceae</name>
    <dbReference type="NCBI Taxonomy" id="543"/>
</organismHost>
<gene>
    <name evidence="2" type="primary">U'</name>
</gene>
<accession>Q71TD7</accession>
<evidence type="ECO:0000250" key="1">
    <source>
        <dbReference type="UniProtKB" id="Q9T1U9"/>
    </source>
</evidence>
<evidence type="ECO:0000305" key="2"/>
<evidence type="ECO:0000305" key="3">
    <source>
    </source>
</evidence>
<evidence type="ECO:0000312" key="4">
    <source>
        <dbReference type="EMBL" id="AAQ14112.1"/>
    </source>
</evidence>
<sequence>MMHLRNITAGNPKTKEQYQLTKQFNIKWLYTEDGKNWYEEQKNFQYDTLKMAYDHNGVIICIEKDVSAINPEGASVVELPDITANRRADISGKWMFKDGVVVKRTYTEEEQRQQAENEKQSLLQLVRDKTQLWDSQLRLGIISAENKQKLTEWMLFAQKVESTDTSSLPVTFPEQPE</sequence>